<sequence>MIHGLLGRKIGMMQYFTKEGRAIPVTVIAAGPCIVTQIRTPERDGYSAVQLGYEEVEARKLTKPQQGHLKASGGKMLRYLREFSADDPLAHKPGEVVTVELFKPGQKVDISGTSKGRGFAGVVKRHGFRGGPKTHGQSDRHRAPGSIGAGTTPGRVWKGQRMAGRMGGDRVTIQNLEVVEVLPEQNLLLVKGSVPGARNGLLQIRKAVKG</sequence>
<proteinExistence type="inferred from homology"/>
<reference key="1">
    <citation type="submission" date="2008-12" db="EMBL/GenBank/DDBJ databases">
        <title>Complete sequence of Chloroflexus aggregans DSM 9485.</title>
        <authorList>
            <consortium name="US DOE Joint Genome Institute"/>
            <person name="Lucas S."/>
            <person name="Copeland A."/>
            <person name="Lapidus A."/>
            <person name="Glavina del Rio T."/>
            <person name="Dalin E."/>
            <person name="Tice H."/>
            <person name="Pitluck S."/>
            <person name="Foster B."/>
            <person name="Larimer F."/>
            <person name="Land M."/>
            <person name="Hauser L."/>
            <person name="Kyrpides N."/>
            <person name="Mikhailova N."/>
            <person name="Bryant D.A."/>
            <person name="Richardson P."/>
        </authorList>
    </citation>
    <scope>NUCLEOTIDE SEQUENCE [LARGE SCALE GENOMIC DNA]</scope>
    <source>
        <strain>MD-66 / DSM 9485</strain>
    </source>
</reference>
<feature type="chain" id="PRO_1000165875" description="Large ribosomal subunit protein uL3">
    <location>
        <begin position="1"/>
        <end position="210"/>
    </location>
</feature>
<feature type="region of interest" description="Disordered" evidence="2">
    <location>
        <begin position="125"/>
        <end position="154"/>
    </location>
</feature>
<name>RL3_CHLAD</name>
<keyword id="KW-0687">Ribonucleoprotein</keyword>
<keyword id="KW-0689">Ribosomal protein</keyword>
<keyword id="KW-0694">RNA-binding</keyword>
<keyword id="KW-0699">rRNA-binding</keyword>
<organism>
    <name type="scientific">Chloroflexus aggregans (strain MD-66 / DSM 9485)</name>
    <dbReference type="NCBI Taxonomy" id="326427"/>
    <lineage>
        <taxon>Bacteria</taxon>
        <taxon>Bacillati</taxon>
        <taxon>Chloroflexota</taxon>
        <taxon>Chloroflexia</taxon>
        <taxon>Chloroflexales</taxon>
        <taxon>Chloroflexineae</taxon>
        <taxon>Chloroflexaceae</taxon>
        <taxon>Chloroflexus</taxon>
    </lineage>
</organism>
<dbReference type="EMBL" id="CP001337">
    <property type="protein sequence ID" value="ACL25884.1"/>
    <property type="molecule type" value="Genomic_DNA"/>
</dbReference>
<dbReference type="RefSeq" id="WP_015941738.1">
    <property type="nucleotide sequence ID" value="NC_011831.1"/>
</dbReference>
<dbReference type="SMR" id="B8G6S5"/>
<dbReference type="STRING" id="326427.Cagg_3024"/>
<dbReference type="KEGG" id="cag:Cagg_3024"/>
<dbReference type="eggNOG" id="COG0087">
    <property type="taxonomic scope" value="Bacteria"/>
</dbReference>
<dbReference type="HOGENOM" id="CLU_044142_4_1_0"/>
<dbReference type="OrthoDB" id="9806135at2"/>
<dbReference type="Proteomes" id="UP000002508">
    <property type="component" value="Chromosome"/>
</dbReference>
<dbReference type="GO" id="GO:0022625">
    <property type="term" value="C:cytosolic large ribosomal subunit"/>
    <property type="evidence" value="ECO:0007669"/>
    <property type="project" value="TreeGrafter"/>
</dbReference>
<dbReference type="GO" id="GO:0019843">
    <property type="term" value="F:rRNA binding"/>
    <property type="evidence" value="ECO:0007669"/>
    <property type="project" value="UniProtKB-UniRule"/>
</dbReference>
<dbReference type="GO" id="GO:0003735">
    <property type="term" value="F:structural constituent of ribosome"/>
    <property type="evidence" value="ECO:0007669"/>
    <property type="project" value="InterPro"/>
</dbReference>
<dbReference type="GO" id="GO:0006412">
    <property type="term" value="P:translation"/>
    <property type="evidence" value="ECO:0007669"/>
    <property type="project" value="UniProtKB-UniRule"/>
</dbReference>
<dbReference type="FunFam" id="2.40.30.10:FF:000004">
    <property type="entry name" value="50S ribosomal protein L3"/>
    <property type="match status" value="1"/>
</dbReference>
<dbReference type="FunFam" id="3.30.160.810:FF:000001">
    <property type="entry name" value="50S ribosomal protein L3"/>
    <property type="match status" value="1"/>
</dbReference>
<dbReference type="Gene3D" id="3.30.160.810">
    <property type="match status" value="1"/>
</dbReference>
<dbReference type="Gene3D" id="2.40.30.10">
    <property type="entry name" value="Translation factors"/>
    <property type="match status" value="1"/>
</dbReference>
<dbReference type="HAMAP" id="MF_01325_B">
    <property type="entry name" value="Ribosomal_uL3_B"/>
    <property type="match status" value="1"/>
</dbReference>
<dbReference type="InterPro" id="IPR000597">
    <property type="entry name" value="Ribosomal_uL3"/>
</dbReference>
<dbReference type="InterPro" id="IPR019927">
    <property type="entry name" value="Ribosomal_uL3_bac/org-type"/>
</dbReference>
<dbReference type="InterPro" id="IPR019926">
    <property type="entry name" value="Ribosomal_uL3_CS"/>
</dbReference>
<dbReference type="InterPro" id="IPR009000">
    <property type="entry name" value="Transl_B-barrel_sf"/>
</dbReference>
<dbReference type="NCBIfam" id="TIGR03625">
    <property type="entry name" value="L3_bact"/>
    <property type="match status" value="1"/>
</dbReference>
<dbReference type="PANTHER" id="PTHR11229">
    <property type="entry name" value="50S RIBOSOMAL PROTEIN L3"/>
    <property type="match status" value="1"/>
</dbReference>
<dbReference type="PANTHER" id="PTHR11229:SF16">
    <property type="entry name" value="LARGE RIBOSOMAL SUBUNIT PROTEIN UL3C"/>
    <property type="match status" value="1"/>
</dbReference>
<dbReference type="Pfam" id="PF00297">
    <property type="entry name" value="Ribosomal_L3"/>
    <property type="match status" value="1"/>
</dbReference>
<dbReference type="SUPFAM" id="SSF50447">
    <property type="entry name" value="Translation proteins"/>
    <property type="match status" value="1"/>
</dbReference>
<dbReference type="PROSITE" id="PS00474">
    <property type="entry name" value="RIBOSOMAL_L3"/>
    <property type="match status" value="1"/>
</dbReference>
<comment type="function">
    <text evidence="1">One of the primary rRNA binding proteins, it binds directly near the 3'-end of the 23S rRNA, where it nucleates assembly of the 50S subunit.</text>
</comment>
<comment type="subunit">
    <text evidence="1">Part of the 50S ribosomal subunit. Forms a cluster with proteins L14 and L19.</text>
</comment>
<comment type="similarity">
    <text evidence="1">Belongs to the universal ribosomal protein uL3 family.</text>
</comment>
<gene>
    <name evidence="1" type="primary">rplC</name>
    <name type="ordered locus">Cagg_3024</name>
</gene>
<protein>
    <recommendedName>
        <fullName evidence="1">Large ribosomal subunit protein uL3</fullName>
    </recommendedName>
    <alternativeName>
        <fullName evidence="3">50S ribosomal protein L3</fullName>
    </alternativeName>
</protein>
<evidence type="ECO:0000255" key="1">
    <source>
        <dbReference type="HAMAP-Rule" id="MF_01325"/>
    </source>
</evidence>
<evidence type="ECO:0000256" key="2">
    <source>
        <dbReference type="SAM" id="MobiDB-lite"/>
    </source>
</evidence>
<evidence type="ECO:0000305" key="3"/>
<accession>B8G6S5</accession>